<dbReference type="EMBL" id="CP000494">
    <property type="protein sequence ID" value="ABQ32513.1"/>
    <property type="molecule type" value="Genomic_DNA"/>
</dbReference>
<dbReference type="RefSeq" id="WP_008539890.1">
    <property type="nucleotide sequence ID" value="NC_009485.1"/>
</dbReference>
<dbReference type="SMR" id="A5E8L9"/>
<dbReference type="STRING" id="288000.BBta_0216"/>
<dbReference type="GeneID" id="93180943"/>
<dbReference type="KEGG" id="bbt:BBta_0216"/>
<dbReference type="eggNOG" id="COG0291">
    <property type="taxonomic scope" value="Bacteria"/>
</dbReference>
<dbReference type="HOGENOM" id="CLU_169643_2_1_5"/>
<dbReference type="OrthoDB" id="9804851at2"/>
<dbReference type="Proteomes" id="UP000000246">
    <property type="component" value="Chromosome"/>
</dbReference>
<dbReference type="GO" id="GO:0022625">
    <property type="term" value="C:cytosolic large ribosomal subunit"/>
    <property type="evidence" value="ECO:0007669"/>
    <property type="project" value="TreeGrafter"/>
</dbReference>
<dbReference type="GO" id="GO:0003735">
    <property type="term" value="F:structural constituent of ribosome"/>
    <property type="evidence" value="ECO:0007669"/>
    <property type="project" value="InterPro"/>
</dbReference>
<dbReference type="GO" id="GO:0006412">
    <property type="term" value="P:translation"/>
    <property type="evidence" value="ECO:0007669"/>
    <property type="project" value="UniProtKB-UniRule"/>
</dbReference>
<dbReference type="FunFam" id="4.10.410.60:FF:000001">
    <property type="entry name" value="50S ribosomal protein L35"/>
    <property type="match status" value="1"/>
</dbReference>
<dbReference type="Gene3D" id="4.10.410.60">
    <property type="match status" value="1"/>
</dbReference>
<dbReference type="HAMAP" id="MF_00514">
    <property type="entry name" value="Ribosomal_bL35"/>
    <property type="match status" value="1"/>
</dbReference>
<dbReference type="InterPro" id="IPR001706">
    <property type="entry name" value="Ribosomal_bL35"/>
</dbReference>
<dbReference type="InterPro" id="IPR021137">
    <property type="entry name" value="Ribosomal_bL35-like"/>
</dbReference>
<dbReference type="InterPro" id="IPR018265">
    <property type="entry name" value="Ribosomal_bL35_CS"/>
</dbReference>
<dbReference type="InterPro" id="IPR037229">
    <property type="entry name" value="Ribosomal_bL35_sf"/>
</dbReference>
<dbReference type="NCBIfam" id="TIGR00001">
    <property type="entry name" value="rpmI_bact"/>
    <property type="match status" value="1"/>
</dbReference>
<dbReference type="PANTHER" id="PTHR33343">
    <property type="entry name" value="54S RIBOSOMAL PROTEIN BL35M"/>
    <property type="match status" value="1"/>
</dbReference>
<dbReference type="PANTHER" id="PTHR33343:SF1">
    <property type="entry name" value="LARGE RIBOSOMAL SUBUNIT PROTEIN BL35M"/>
    <property type="match status" value="1"/>
</dbReference>
<dbReference type="Pfam" id="PF01632">
    <property type="entry name" value="Ribosomal_L35p"/>
    <property type="match status" value="1"/>
</dbReference>
<dbReference type="PRINTS" id="PR00064">
    <property type="entry name" value="RIBOSOMALL35"/>
</dbReference>
<dbReference type="SUPFAM" id="SSF143034">
    <property type="entry name" value="L35p-like"/>
    <property type="match status" value="1"/>
</dbReference>
<dbReference type="PROSITE" id="PS00936">
    <property type="entry name" value="RIBOSOMAL_L35"/>
    <property type="match status" value="1"/>
</dbReference>
<reference key="1">
    <citation type="journal article" date="2007" name="Science">
        <title>Legumes symbioses: absence of nod genes in photosynthetic bradyrhizobia.</title>
        <authorList>
            <person name="Giraud E."/>
            <person name="Moulin L."/>
            <person name="Vallenet D."/>
            <person name="Barbe V."/>
            <person name="Cytryn E."/>
            <person name="Avarre J.-C."/>
            <person name="Jaubert M."/>
            <person name="Simon D."/>
            <person name="Cartieaux F."/>
            <person name="Prin Y."/>
            <person name="Bena G."/>
            <person name="Hannibal L."/>
            <person name="Fardoux J."/>
            <person name="Kojadinovic M."/>
            <person name="Vuillet L."/>
            <person name="Lajus A."/>
            <person name="Cruveiller S."/>
            <person name="Rouy Z."/>
            <person name="Mangenot S."/>
            <person name="Segurens B."/>
            <person name="Dossat C."/>
            <person name="Franck W.L."/>
            <person name="Chang W.-S."/>
            <person name="Saunders E."/>
            <person name="Bruce D."/>
            <person name="Richardson P."/>
            <person name="Normand P."/>
            <person name="Dreyfus B."/>
            <person name="Pignol D."/>
            <person name="Stacey G."/>
            <person name="Emerich D."/>
            <person name="Vermeglio A."/>
            <person name="Medigue C."/>
            <person name="Sadowsky M."/>
        </authorList>
    </citation>
    <scope>NUCLEOTIDE SEQUENCE [LARGE SCALE GENOMIC DNA]</scope>
    <source>
        <strain>BTAi1 / ATCC BAA-1182</strain>
    </source>
</reference>
<feature type="chain" id="PRO_1000050662" description="Large ribosomal subunit protein bL35">
    <location>
        <begin position="1"/>
        <end position="66"/>
    </location>
</feature>
<accession>A5E8L9</accession>
<proteinExistence type="inferred from homology"/>
<organism>
    <name type="scientific">Bradyrhizobium sp. (strain BTAi1 / ATCC BAA-1182)</name>
    <dbReference type="NCBI Taxonomy" id="288000"/>
    <lineage>
        <taxon>Bacteria</taxon>
        <taxon>Pseudomonadati</taxon>
        <taxon>Pseudomonadota</taxon>
        <taxon>Alphaproteobacteria</taxon>
        <taxon>Hyphomicrobiales</taxon>
        <taxon>Nitrobacteraceae</taxon>
        <taxon>Bradyrhizobium</taxon>
    </lineage>
</organism>
<name>RL35_BRASB</name>
<protein>
    <recommendedName>
        <fullName evidence="1">Large ribosomal subunit protein bL35</fullName>
    </recommendedName>
    <alternativeName>
        <fullName evidence="2">50S ribosomal protein L35</fullName>
    </alternativeName>
</protein>
<keyword id="KW-1185">Reference proteome</keyword>
<keyword id="KW-0687">Ribonucleoprotein</keyword>
<keyword id="KW-0689">Ribosomal protein</keyword>
<gene>
    <name evidence="1" type="primary">rpmI</name>
    <name type="ordered locus">BBta_0216</name>
</gene>
<evidence type="ECO:0000255" key="1">
    <source>
        <dbReference type="HAMAP-Rule" id="MF_00514"/>
    </source>
</evidence>
<evidence type="ECO:0000305" key="2"/>
<comment type="similarity">
    <text evidence="1">Belongs to the bacterial ribosomal protein bL35 family.</text>
</comment>
<sequence>MPKLKTKSGAKKRFKVTATGKVMHAQRGKRHGMIKRTKKQIRQLRGTRVLFKTDGDNVKKYFLPNA</sequence>